<evidence type="ECO:0000255" key="1">
    <source>
        <dbReference type="HAMAP-Rule" id="MF_01590"/>
    </source>
</evidence>
<reference key="1">
    <citation type="submission" date="2007-07" db="EMBL/GenBank/DDBJ databases">
        <title>Genome sequence of Campylobacter curvus 525.92 isolated from human feces.</title>
        <authorList>
            <person name="Fouts D.E."/>
            <person name="Mongodin E.F."/>
            <person name="Puiu D."/>
            <person name="Sebastian Y."/>
            <person name="Miller W.G."/>
            <person name="Mandrell R.E."/>
            <person name="Lastovica A.J."/>
            <person name="Nelson K.E."/>
        </authorList>
    </citation>
    <scope>NUCLEOTIDE SEQUENCE [LARGE SCALE GENOMIC DNA]</scope>
    <source>
        <strain>525.92</strain>
    </source>
</reference>
<sequence length="298" mass="34219">MDINKARKAKFDELNSGKNLEISRAIEALGDLECACEFSDTINIKFQNLSAEKKEEIYALAKSLKPWRKGPFKIDDIFIDTEWQSFIKFNLLAPHLNLDGKSVADVGCNNGYYMFRMLNFAPKKITGFDPSVHTALQFKFINHFAKTNIAYEMLGVEHLPFFESKFDTIFCLGVIYHRSDPIKMLKELKSALNPGGEVFLDTMYIDMRGEFALSPKNTYSKIPNIYFVPTIDALQGWCERAKFKDFEILATKQTDTSEQRKTPWIDGQSLQNFLDPNDNTKTIEGYPAPKRVYVKIKI</sequence>
<keyword id="KW-1185">Reference proteome</keyword>
<keyword id="KW-0808">Transferase</keyword>
<keyword id="KW-0819">tRNA processing</keyword>
<comment type="function">
    <text evidence="1">Catalyzes carboxymethyl transfer from carboxy-S-adenosyl-L-methionine (Cx-SAM) to 5-hydroxyuridine (ho5U) to form 5-carboxymethoxyuridine (cmo5U) at position 34 in tRNAs.</text>
</comment>
<comment type="catalytic activity">
    <reaction evidence="1">
        <text>carboxy-S-adenosyl-L-methionine + 5-hydroxyuridine(34) in tRNA = 5-carboxymethoxyuridine(34) in tRNA + S-adenosyl-L-homocysteine + H(+)</text>
        <dbReference type="Rhea" id="RHEA:52848"/>
        <dbReference type="Rhea" id="RHEA-COMP:13381"/>
        <dbReference type="Rhea" id="RHEA-COMP:13383"/>
        <dbReference type="ChEBI" id="CHEBI:15378"/>
        <dbReference type="ChEBI" id="CHEBI:57856"/>
        <dbReference type="ChEBI" id="CHEBI:134278"/>
        <dbReference type="ChEBI" id="CHEBI:136877"/>
        <dbReference type="ChEBI" id="CHEBI:136879"/>
    </reaction>
</comment>
<comment type="subunit">
    <text evidence="1">Homotetramer.</text>
</comment>
<comment type="similarity">
    <text evidence="1">Belongs to the class I-like SAM-binding methyltransferase superfamily. CmoB family.</text>
</comment>
<protein>
    <recommendedName>
        <fullName evidence="1">tRNA U34 carboxymethyltransferase</fullName>
        <ecNumber evidence="1">2.5.1.-</ecNumber>
    </recommendedName>
</protein>
<organism>
    <name type="scientific">Campylobacter curvus (strain 525.92)</name>
    <dbReference type="NCBI Taxonomy" id="360105"/>
    <lineage>
        <taxon>Bacteria</taxon>
        <taxon>Pseudomonadati</taxon>
        <taxon>Campylobacterota</taxon>
        <taxon>Epsilonproteobacteria</taxon>
        <taxon>Campylobacterales</taxon>
        <taxon>Campylobacteraceae</taxon>
        <taxon>Campylobacter</taxon>
    </lineage>
</organism>
<feature type="chain" id="PRO_0000381853" description="tRNA U34 carboxymethyltransferase">
    <location>
        <begin position="1"/>
        <end position="298"/>
    </location>
</feature>
<feature type="binding site" evidence="1">
    <location>
        <position position="69"/>
    </location>
    <ligand>
        <name>carboxy-S-adenosyl-L-methionine</name>
        <dbReference type="ChEBI" id="CHEBI:134278"/>
    </ligand>
</feature>
<feature type="binding site" evidence="1">
    <location>
        <position position="83"/>
    </location>
    <ligand>
        <name>carboxy-S-adenosyl-L-methionine</name>
        <dbReference type="ChEBI" id="CHEBI:134278"/>
    </ligand>
</feature>
<feature type="binding site" evidence="1">
    <location>
        <position position="88"/>
    </location>
    <ligand>
        <name>carboxy-S-adenosyl-L-methionine</name>
        <dbReference type="ChEBI" id="CHEBI:134278"/>
    </ligand>
</feature>
<feature type="binding site" evidence="1">
    <location>
        <position position="107"/>
    </location>
    <ligand>
        <name>carboxy-S-adenosyl-L-methionine</name>
        <dbReference type="ChEBI" id="CHEBI:134278"/>
    </ligand>
</feature>
<feature type="binding site" evidence="1">
    <location>
        <begin position="129"/>
        <end position="131"/>
    </location>
    <ligand>
        <name>carboxy-S-adenosyl-L-methionine</name>
        <dbReference type="ChEBI" id="CHEBI:134278"/>
    </ligand>
</feature>
<feature type="binding site" evidence="1">
    <location>
        <begin position="156"/>
        <end position="157"/>
    </location>
    <ligand>
        <name>carboxy-S-adenosyl-L-methionine</name>
        <dbReference type="ChEBI" id="CHEBI:134278"/>
    </ligand>
</feature>
<feature type="binding site" evidence="1">
    <location>
        <position position="176"/>
    </location>
    <ligand>
        <name>carboxy-S-adenosyl-L-methionine</name>
        <dbReference type="ChEBI" id="CHEBI:134278"/>
    </ligand>
</feature>
<feature type="binding site" evidence="1">
    <location>
        <position position="291"/>
    </location>
    <ligand>
        <name>carboxy-S-adenosyl-L-methionine</name>
        <dbReference type="ChEBI" id="CHEBI:134278"/>
    </ligand>
</feature>
<gene>
    <name evidence="1" type="primary">cmoB</name>
    <name type="ordered locus">Ccur92_07550</name>
    <name type="ORF">CCV52592_0121</name>
</gene>
<dbReference type="EC" id="2.5.1.-" evidence="1"/>
<dbReference type="EMBL" id="CP000767">
    <property type="protein sequence ID" value="EAU00240.1"/>
    <property type="molecule type" value="Genomic_DNA"/>
</dbReference>
<dbReference type="RefSeq" id="WP_009650369.1">
    <property type="nucleotide sequence ID" value="NC_009715.2"/>
</dbReference>
<dbReference type="SMR" id="A7GXW7"/>
<dbReference type="STRING" id="360105.CCV52592_0121"/>
<dbReference type="KEGG" id="ccv:CCV52592_0121"/>
<dbReference type="HOGENOM" id="CLU_052665_1_0_7"/>
<dbReference type="OrthoDB" id="9765084at2"/>
<dbReference type="Proteomes" id="UP000006380">
    <property type="component" value="Chromosome"/>
</dbReference>
<dbReference type="GO" id="GO:0008168">
    <property type="term" value="F:methyltransferase activity"/>
    <property type="evidence" value="ECO:0007669"/>
    <property type="project" value="TreeGrafter"/>
</dbReference>
<dbReference type="GO" id="GO:0016765">
    <property type="term" value="F:transferase activity, transferring alkyl or aryl (other than methyl) groups"/>
    <property type="evidence" value="ECO:0007669"/>
    <property type="project" value="InterPro"/>
</dbReference>
<dbReference type="GO" id="GO:0002098">
    <property type="term" value="P:tRNA wobble uridine modification"/>
    <property type="evidence" value="ECO:0007669"/>
    <property type="project" value="InterPro"/>
</dbReference>
<dbReference type="CDD" id="cd02440">
    <property type="entry name" value="AdoMet_MTases"/>
    <property type="match status" value="1"/>
</dbReference>
<dbReference type="Gene3D" id="3.40.50.150">
    <property type="entry name" value="Vaccinia Virus protein VP39"/>
    <property type="match status" value="1"/>
</dbReference>
<dbReference type="HAMAP" id="MF_01590">
    <property type="entry name" value="tRNA_carboxymethyltr_CmoB"/>
    <property type="match status" value="1"/>
</dbReference>
<dbReference type="InterPro" id="IPR010017">
    <property type="entry name" value="CmoB"/>
</dbReference>
<dbReference type="InterPro" id="IPR027555">
    <property type="entry name" value="Mo5U34_MeTrfas-like"/>
</dbReference>
<dbReference type="InterPro" id="IPR029063">
    <property type="entry name" value="SAM-dependent_MTases_sf"/>
</dbReference>
<dbReference type="NCBIfam" id="NF011650">
    <property type="entry name" value="PRK15068.1"/>
    <property type="match status" value="1"/>
</dbReference>
<dbReference type="NCBIfam" id="TIGR00452">
    <property type="entry name" value="tRNA 5-methoxyuridine(34)/uridine 5-oxyacetic acid(34) synthase CmoB"/>
    <property type="match status" value="1"/>
</dbReference>
<dbReference type="PANTHER" id="PTHR43464">
    <property type="entry name" value="METHYLTRANSFERASE"/>
    <property type="match status" value="1"/>
</dbReference>
<dbReference type="PANTHER" id="PTHR43464:SF95">
    <property type="entry name" value="TRNA U34 CARBOXYMETHYLTRANSFERASE"/>
    <property type="match status" value="1"/>
</dbReference>
<dbReference type="Pfam" id="PF08003">
    <property type="entry name" value="Methyltransf_9"/>
    <property type="match status" value="1"/>
</dbReference>
<dbReference type="SUPFAM" id="SSF53335">
    <property type="entry name" value="S-adenosyl-L-methionine-dependent methyltransferases"/>
    <property type="match status" value="1"/>
</dbReference>
<proteinExistence type="inferred from homology"/>
<name>CMOB_CAMC5</name>
<accession>A7GXW7</accession>